<reference key="1">
    <citation type="submission" date="2002-11" db="EMBL/GenBank/DDBJ databases">
        <title>Identification of complete keratin-associated protein (KAP) gene cluster spanning 800 kb region on human chromosome 21q22.11.</title>
        <authorList>
            <person name="Obayashi I."/>
            <person name="Shibuya K."/>
            <person name="Minoshima S."/>
            <person name="Kudoh J."/>
            <person name="Shimizu N."/>
        </authorList>
    </citation>
    <scope>NUCLEOTIDE SEQUENCE [MRNA]</scope>
    <source>
        <tissue>Hair root</tissue>
    </source>
</reference>
<reference key="2">
    <citation type="journal article" date="2008" name="Br. J. Dermatol.">
        <title>Characterization and expression analysis of the hair keratin associated protein KAP26.1.</title>
        <authorList>
            <person name="Rogers M.A."/>
            <person name="Langbein L."/>
            <person name="Praetzel-Wunder S."/>
            <person name="Giehl K."/>
        </authorList>
    </citation>
    <scope>NUCLEOTIDE SEQUENCE [MRNA]</scope>
    <scope>TISSUE SPECIFICITY</scope>
    <source>
        <tissue>Scalp</tissue>
    </source>
</reference>
<reference key="3">
    <citation type="journal article" date="2004" name="Genome Res.">
        <title>The status, quality, and expansion of the NIH full-length cDNA project: the Mammalian Gene Collection (MGC).</title>
        <authorList>
            <consortium name="The MGC Project Team"/>
        </authorList>
    </citation>
    <scope>NUCLEOTIDE SEQUENCE [LARGE SCALE MRNA]</scope>
    <source>
        <tissue>Placenta</tissue>
    </source>
</reference>
<comment type="function">
    <text>In the hair cortex, hair keratin intermediate filaments are embedded in an interfilamentous matrix, consisting of hair keratin-associated proteins (KRTAP), which are essential for the formation of a rigid and resistant hair shaft through their extensive disulfide bond cross-linking with abundant cysteine residues of hair keratins. The matrix proteins include the high-sulfur and high-glycine-tyrosine keratins.</text>
</comment>
<comment type="subunit">
    <text>Interacts with hair keratins.</text>
</comment>
<comment type="interaction">
    <interactant intactId="EBI-3957672">
        <id>Q6PEX3</id>
    </interactant>
    <interactant intactId="EBI-11976299">
        <id>Q5BKX5-3</id>
        <label>ACTMAP</label>
    </interactant>
    <organismsDiffer>false</organismsDiffer>
    <experiments>3</experiments>
</comment>
<comment type="interaction">
    <interactant intactId="EBI-3957672">
        <id>Q6PEX3</id>
    </interactant>
    <interactant intactId="EBI-3916242">
        <id>Q96HD9</id>
        <label>ACY3</label>
    </interactant>
    <organismsDiffer>false</organismsDiffer>
    <experiments>3</experiments>
</comment>
<comment type="interaction">
    <interactant intactId="EBI-3957672">
        <id>Q6PEX3</id>
    </interactant>
    <interactant intactId="EBI-948603">
        <id>Q03989</id>
        <label>ARID5A</label>
    </interactant>
    <organismsDiffer>false</organismsDiffer>
    <experiments>3</experiments>
</comment>
<comment type="interaction">
    <interactant intactId="EBI-3957672">
        <id>Q6PEX3</id>
    </interactant>
    <interactant intactId="EBI-3866279">
        <id>Q9BWT7</id>
        <label>CARD10</label>
    </interactant>
    <organismsDiffer>false</organismsDiffer>
    <experiments>3</experiments>
</comment>
<comment type="interaction">
    <interactant intactId="EBI-3957672">
        <id>Q6PEX3</id>
    </interactant>
    <interactant intactId="EBI-21668062">
        <id>Q8IV13</id>
        <label>CCNJL</label>
    </interactant>
    <organismsDiffer>false</organismsDiffer>
    <experiments>4</experiments>
</comment>
<comment type="interaction">
    <interactant intactId="EBI-3957672">
        <id>Q6PEX3</id>
    </interactant>
    <interactant intactId="EBI-12139335">
        <id>Q8N6W0</id>
        <label>CELF5</label>
    </interactant>
    <organismsDiffer>false</organismsDiffer>
    <experiments>3</experiments>
</comment>
<comment type="interaction">
    <interactant intactId="EBI-3957672">
        <id>Q6PEX3</id>
    </interactant>
    <interactant intactId="EBI-12261896">
        <id>Q5T4B2</id>
        <label>CERCAM</label>
    </interactant>
    <organismsDiffer>false</organismsDiffer>
    <experiments>3</experiments>
</comment>
<comment type="interaction">
    <interactant intactId="EBI-3957672">
        <id>Q6PEX3</id>
    </interactant>
    <interactant intactId="EBI-749051">
        <id>Q8IYR0</id>
        <label>CFAP206</label>
    </interactant>
    <organismsDiffer>false</organismsDiffer>
    <experiments>3</experiments>
</comment>
<comment type="interaction">
    <interactant intactId="EBI-3957672">
        <id>Q6PEX3</id>
    </interactant>
    <interactant intactId="EBI-747133">
        <id>P27658</id>
        <label>COL8A1</label>
    </interactant>
    <organismsDiffer>false</organismsDiffer>
    <experiments>4</experiments>
</comment>
<comment type="interaction">
    <interactant intactId="EBI-3957672">
        <id>Q6PEX3</id>
    </interactant>
    <interactant intactId="EBI-3867333">
        <id>A8MQ03</id>
        <label>CYSRT1</label>
    </interactant>
    <organismsDiffer>false</organismsDiffer>
    <experiments>3</experiments>
</comment>
<comment type="interaction">
    <interactant intactId="EBI-3957672">
        <id>Q6PEX3</id>
    </interactant>
    <interactant intactId="EBI-724310">
        <id>Q15038</id>
        <label>DAZAP2</label>
    </interactant>
    <organismsDiffer>false</organismsDiffer>
    <experiments>3</experiments>
</comment>
<comment type="interaction">
    <interactant intactId="EBI-3957672">
        <id>Q6PEX3</id>
    </interactant>
    <interactant intactId="EBI-740376">
        <id>Q86UW9</id>
        <label>DTX2</label>
    </interactant>
    <organismsDiffer>false</organismsDiffer>
    <experiments>3</experiments>
</comment>
<comment type="interaction">
    <interactant intactId="EBI-3957672">
        <id>Q6PEX3</id>
    </interactant>
    <interactant intactId="EBI-743414">
        <id>O95967</id>
        <label>EFEMP2</label>
    </interactant>
    <organismsDiffer>false</organismsDiffer>
    <experiments>3</experiments>
</comment>
<comment type="interaction">
    <interactant intactId="EBI-3957672">
        <id>Q6PEX3</id>
    </interactant>
    <interactant intactId="EBI-12193763">
        <id>A1KXE4-2</id>
        <label>FAM168B</label>
    </interactant>
    <organismsDiffer>false</organismsDiffer>
    <experiments>3</experiments>
</comment>
<comment type="interaction">
    <interactant intactId="EBI-3957672">
        <id>Q6PEX3</id>
    </interactant>
    <interactant intactId="EBI-2807642">
        <id>Q8WU58</id>
        <label>FAM222B</label>
    </interactant>
    <organismsDiffer>false</organismsDiffer>
    <experiments>3</experiments>
</comment>
<comment type="interaction">
    <interactant intactId="EBI-3957672">
        <id>Q6PEX3</id>
    </interactant>
    <interactant intactId="EBI-10310206">
        <id>Q9HBR3</id>
        <label>GDPD5</label>
    </interactant>
    <organismsDiffer>false</organismsDiffer>
    <experiments>3</experiments>
</comment>
<comment type="interaction">
    <interactant intactId="EBI-3957672">
        <id>Q6PEX3</id>
    </interactant>
    <interactant intactId="EBI-747754">
        <id>P28799</id>
        <label>GRN</label>
    </interactant>
    <organismsDiffer>false</organismsDiffer>
    <experiments>8</experiments>
</comment>
<comment type="interaction">
    <interactant intactId="EBI-3957672">
        <id>Q6PEX3</id>
    </interactant>
    <interactant intactId="EBI-16429135">
        <id>A0A0S2Z4Q4</id>
        <label>HGS</label>
    </interactant>
    <organismsDiffer>false</organismsDiffer>
    <experiments>3</experiments>
</comment>
<comment type="interaction">
    <interactant intactId="EBI-3957672">
        <id>Q6PEX3</id>
    </interactant>
    <interactant intactId="EBI-740220">
        <id>O14964</id>
        <label>HGS</label>
    </interactant>
    <organismsDiffer>false</organismsDiffer>
    <experiments>3</experiments>
</comment>
<comment type="interaction">
    <interactant intactId="EBI-3957672">
        <id>Q6PEX3</id>
    </interactant>
    <interactant intactId="EBI-2798841">
        <id>P35680</id>
        <label>HNF1B</label>
    </interactant>
    <organismsDiffer>false</organismsDiffer>
    <experiments>3</experiments>
</comment>
<comment type="interaction">
    <interactant intactId="EBI-3957672">
        <id>Q6PEX3</id>
    </interactant>
    <interactant intactId="EBI-740785">
        <id>P49639</id>
        <label>HOXA1</label>
    </interactant>
    <organismsDiffer>false</organismsDiffer>
    <experiments>8</experiments>
</comment>
<comment type="interaction">
    <interactant intactId="EBI-3957672">
        <id>Q6PEX3</id>
    </interactant>
    <interactant intactId="EBI-1387094">
        <id>Q02535</id>
        <label>ID3</label>
    </interactant>
    <organismsDiffer>false</organismsDiffer>
    <experiments>3</experiments>
</comment>
<comment type="interaction">
    <interactant intactId="EBI-3957672">
        <id>Q6PEX3</id>
    </interactant>
    <interactant intactId="EBI-748258">
        <id>Q5TA45</id>
        <label>INTS11</label>
    </interactant>
    <organismsDiffer>false</organismsDiffer>
    <experiments>3</experiments>
</comment>
<comment type="interaction">
    <interactant intactId="EBI-3957672">
        <id>Q6PEX3</id>
    </interactant>
    <interactant intactId="EBI-1047093">
        <id>O76011</id>
        <label>KRT34</label>
    </interactant>
    <organismsDiffer>false</organismsDiffer>
    <experiments>3</experiments>
</comment>
<comment type="interaction">
    <interactant intactId="EBI-3957672">
        <id>Q6PEX3</id>
    </interactant>
    <interactant intactId="EBI-11959885">
        <id>Q07627</id>
        <label>KRTAP1-1</label>
    </interactant>
    <organismsDiffer>false</organismsDiffer>
    <experiments>3</experiments>
</comment>
<comment type="interaction">
    <interactant intactId="EBI-3957672">
        <id>Q6PEX3</id>
    </interactant>
    <interactant intactId="EBI-10172150">
        <id>P60370</id>
        <label>KRTAP10-5</label>
    </interactant>
    <organismsDiffer>false</organismsDiffer>
    <experiments>3</experiments>
</comment>
<comment type="interaction">
    <interactant intactId="EBI-3957672">
        <id>Q6PEX3</id>
    </interactant>
    <interactant intactId="EBI-10172290">
        <id>P60409</id>
        <label>KRTAP10-7</label>
    </interactant>
    <organismsDiffer>false</organismsDiffer>
    <experiments>3</experiments>
</comment>
<comment type="interaction">
    <interactant intactId="EBI-3957672">
        <id>Q6PEX3</id>
    </interactant>
    <interactant intactId="EBI-10172052">
        <id>P60411</id>
        <label>KRTAP10-9</label>
    </interactant>
    <organismsDiffer>false</organismsDiffer>
    <experiments>3</experiments>
</comment>
<comment type="interaction">
    <interactant intactId="EBI-3957672">
        <id>Q6PEX3</id>
    </interactant>
    <interactant intactId="EBI-1052037">
        <id>Q8IUC1</id>
        <label>KRTAP11-1</label>
    </interactant>
    <organismsDiffer>false</organismsDiffer>
    <experiments>3</experiments>
</comment>
<comment type="interaction">
    <interactant intactId="EBI-3957672">
        <id>Q6PEX3</id>
    </interactant>
    <interactant intactId="EBI-10210845">
        <id>P59990</id>
        <label>KRTAP12-1</label>
    </interactant>
    <organismsDiffer>false</organismsDiffer>
    <experiments>3</experiments>
</comment>
<comment type="interaction">
    <interactant intactId="EBI-3957672">
        <id>Q6PEX3</id>
    </interactant>
    <interactant intactId="EBI-10176379">
        <id>P59991</id>
        <label>KRTAP12-2</label>
    </interactant>
    <organismsDiffer>false</organismsDiffer>
    <experiments>6</experiments>
</comment>
<comment type="interaction">
    <interactant intactId="EBI-3957672">
        <id>Q6PEX3</id>
    </interactant>
    <interactant intactId="EBI-11953846">
        <id>Q52LG2</id>
        <label>KRTAP13-2</label>
    </interactant>
    <organismsDiffer>false</organismsDiffer>
    <experiments>3</experiments>
</comment>
<comment type="interaction">
    <interactant intactId="EBI-3957672">
        <id>Q6PEX3</id>
    </interactant>
    <interactant intactId="EBI-12805508">
        <id>Q3LI70</id>
        <label>KRTAP19-6</label>
    </interactant>
    <organismsDiffer>false</organismsDiffer>
    <experiments>3</experiments>
</comment>
<comment type="interaction">
    <interactant intactId="EBI-3957672">
        <id>Q6PEX3</id>
    </interactant>
    <interactant intactId="EBI-10241353">
        <id>Q3SYF9</id>
        <label>KRTAP19-7</label>
    </interactant>
    <organismsDiffer>false</organismsDiffer>
    <experiments>3</experiments>
</comment>
<comment type="interaction">
    <interactant intactId="EBI-3957672">
        <id>Q6PEX3</id>
    </interactant>
    <interactant intactId="EBI-18395721">
        <id>Q3LI59</id>
        <label>KRTAP21-2</label>
    </interactant>
    <organismsDiffer>false</organismsDiffer>
    <experiments>3</experiments>
</comment>
<comment type="interaction">
    <interactant intactId="EBI-3957672">
        <id>Q6PEX3</id>
    </interactant>
    <interactant intactId="EBI-9996449">
        <id>Q9BYR8</id>
        <label>KRTAP3-1</label>
    </interactant>
    <organismsDiffer>false</organismsDiffer>
    <experiments>3</experiments>
</comment>
<comment type="interaction">
    <interactant intactId="EBI-3957672">
        <id>Q6PEX3</id>
    </interactant>
    <interactant intactId="EBI-751260">
        <id>Q9BYR7</id>
        <label>KRTAP3-2</label>
    </interactant>
    <organismsDiffer>false</organismsDiffer>
    <experiments>3</experiments>
</comment>
<comment type="interaction">
    <interactant intactId="EBI-3957672">
        <id>Q6PEX3</id>
    </interactant>
    <interactant intactId="EBI-739863">
        <id>Q9BQ66</id>
        <label>KRTAP4-12</label>
    </interactant>
    <organismsDiffer>false</organismsDiffer>
    <experiments>3</experiments>
</comment>
<comment type="interaction">
    <interactant intactId="EBI-3957672">
        <id>Q6PEX3</id>
    </interactant>
    <interactant intactId="EBI-10172511">
        <id>Q9BYR5</id>
        <label>KRTAP4-2</label>
    </interactant>
    <organismsDiffer>false</organismsDiffer>
    <experiments>6</experiments>
</comment>
<comment type="interaction">
    <interactant intactId="EBI-3957672">
        <id>Q6PEX3</id>
    </interactant>
    <interactant intactId="EBI-11958132">
        <id>Q9BYR3</id>
        <label>KRTAP4-4</label>
    </interactant>
    <organismsDiffer>false</organismsDiffer>
    <experiments>3</experiments>
</comment>
<comment type="interaction">
    <interactant intactId="EBI-3957672">
        <id>Q6PEX3</id>
    </interactant>
    <interactant intactId="EBI-10302547">
        <id>Q9BYR0</id>
        <label>KRTAP4-7</label>
    </interactant>
    <organismsDiffer>false</organismsDiffer>
    <experiments>3</experiments>
</comment>
<comment type="interaction">
    <interactant intactId="EBI-3957672">
        <id>Q6PEX3</id>
    </interactant>
    <interactant intactId="EBI-10250562">
        <id>Q6L8G9</id>
        <label>KRTAP5-6</label>
    </interactant>
    <organismsDiffer>false</organismsDiffer>
    <experiments>6</experiments>
</comment>
<comment type="interaction">
    <interactant intactId="EBI-3957672">
        <id>Q6PEX3</id>
    </interactant>
    <interactant intactId="EBI-12111050">
        <id>Q3LI64</id>
        <label>KRTAP6-1</label>
    </interactant>
    <organismsDiffer>false</organismsDiffer>
    <experiments>3</experiments>
</comment>
<comment type="interaction">
    <interactant intactId="EBI-3957672">
        <id>Q6PEX3</id>
    </interactant>
    <interactant intactId="EBI-11962084">
        <id>Q3LI66</id>
        <label>KRTAP6-2</label>
    </interactant>
    <organismsDiffer>false</organismsDiffer>
    <experiments>6</experiments>
</comment>
<comment type="interaction">
    <interactant intactId="EBI-3957672">
        <id>Q6PEX3</id>
    </interactant>
    <interactant intactId="EBI-22311199">
        <id>Q3LI67</id>
        <label>KRTAP6-3</label>
    </interactant>
    <organismsDiffer>false</organismsDiffer>
    <experiments>3</experiments>
</comment>
<comment type="interaction">
    <interactant intactId="EBI-3957672">
        <id>Q6PEX3</id>
    </interactant>
    <interactant intactId="EBI-10261141">
        <id>Q8IUC2</id>
        <label>KRTAP8-1</label>
    </interactant>
    <organismsDiffer>false</organismsDiffer>
    <experiments>3</experiments>
</comment>
<comment type="interaction">
    <interactant intactId="EBI-3957672">
        <id>Q6PEX3</id>
    </interactant>
    <interactant intactId="EBI-1044640">
        <id>Q9BYQ4</id>
        <label>KRTAP9-2</label>
    </interactant>
    <organismsDiffer>false</organismsDiffer>
    <experiments>6</experiments>
</comment>
<comment type="interaction">
    <interactant intactId="EBI-3957672">
        <id>Q6PEX3</id>
    </interactant>
    <interactant intactId="EBI-11958364">
        <id>Q9BYQ0</id>
        <label>KRTAP9-8</label>
    </interactant>
    <organismsDiffer>false</organismsDiffer>
    <experiments>3</experiments>
</comment>
<comment type="interaction">
    <interactant intactId="EBI-3957672">
        <id>Q6PEX3</id>
    </interactant>
    <interactant intactId="EBI-9088686">
        <id>Q14847-2</id>
        <label>LASP1</label>
    </interactant>
    <organismsDiffer>false</organismsDiffer>
    <experiments>3</experiments>
</comment>
<comment type="interaction">
    <interactant intactId="EBI-3957672">
        <id>Q6PEX3</id>
    </interactant>
    <interactant intactId="EBI-11478468">
        <id>O14633</id>
        <label>LCE2B</label>
    </interactant>
    <organismsDiffer>false</organismsDiffer>
    <experiments>3</experiments>
</comment>
<comment type="interaction">
    <interactant intactId="EBI-3957672">
        <id>Q6PEX3</id>
    </interactant>
    <interactant intactId="EBI-947402">
        <id>O60336</id>
        <label>MAPKBP1</label>
    </interactant>
    <organismsDiffer>false</organismsDiffer>
    <experiments>3</experiments>
</comment>
<comment type="interaction">
    <interactant intactId="EBI-3957672">
        <id>Q6PEX3</id>
    </interactant>
    <interactant intactId="EBI-12868744">
        <id>P0CG21</id>
        <label>NHLRC4</label>
    </interactant>
    <organismsDiffer>false</organismsDiffer>
    <experiments>3</experiments>
</comment>
<comment type="interaction">
    <interactant intactId="EBI-3957672">
        <id>Q6PEX3</id>
    </interactant>
    <interactant intactId="EBI-945833">
        <id>Q7Z3S9</id>
        <label>NOTCH2NLA</label>
    </interactant>
    <organismsDiffer>false</organismsDiffer>
    <experiments>3</experiments>
</comment>
<comment type="interaction">
    <interactant intactId="EBI-3957672">
        <id>Q6PEX3</id>
    </interactant>
    <interactant intactId="EBI-22310682">
        <id>P0DPK4</id>
        <label>NOTCH2NLC</label>
    </interactant>
    <organismsDiffer>false</organismsDiffer>
    <experiments>3</experiments>
</comment>
<comment type="interaction">
    <interactant intactId="EBI-3957672">
        <id>Q6PEX3</id>
    </interactant>
    <interactant intactId="EBI-740446">
        <id>P32242</id>
        <label>OTX1</label>
    </interactant>
    <organismsDiffer>false</organismsDiffer>
    <experiments>3</experiments>
</comment>
<comment type="interaction">
    <interactant intactId="EBI-3957672">
        <id>Q6PEX3</id>
    </interactant>
    <interactant intactId="EBI-748265">
        <id>P78337</id>
        <label>PITX1</label>
    </interactant>
    <organismsDiffer>false</organismsDiffer>
    <experiments>3</experiments>
</comment>
<comment type="interaction">
    <interactant intactId="EBI-3957672">
        <id>Q6PEX3</id>
    </interactant>
    <interactant intactId="EBI-726466">
        <id>O15496</id>
        <label>PLA2G10</label>
    </interactant>
    <organismsDiffer>false</organismsDiffer>
    <experiments>3</experiments>
</comment>
<comment type="interaction">
    <interactant intactId="EBI-3957672">
        <id>Q6PEX3</id>
    </interactant>
    <interactant intactId="EBI-11339910">
        <id>Q8IYS1</id>
        <label>PM20D2</label>
    </interactant>
    <organismsDiffer>false</organismsDiffer>
    <experiments>3</experiments>
</comment>
<comment type="interaction">
    <interactant intactId="EBI-3957672">
        <id>Q6PEX3</id>
    </interactant>
    <interactant intactId="EBI-11986293">
        <id>P0CG20</id>
        <label>PRR35</label>
    </interactant>
    <organismsDiffer>false</organismsDiffer>
    <experiments>3</experiments>
</comment>
<comment type="interaction">
    <interactant intactId="EBI-3957672">
        <id>Q6PEX3</id>
    </interactant>
    <interactant intactId="EBI-348380">
        <id>P25788</id>
        <label>PSMA3</label>
    </interactant>
    <organismsDiffer>false</organismsDiffer>
    <experiments>3</experiments>
</comment>
<comment type="interaction">
    <interactant intactId="EBI-3957672">
        <id>Q6PEX3</id>
    </interactant>
    <interactant intactId="EBI-740818">
        <id>Q9Y272</id>
        <label>RASD1</label>
    </interactant>
    <organismsDiffer>false</organismsDiffer>
    <experiments>3</experiments>
</comment>
<comment type="interaction">
    <interactant intactId="EBI-3957672">
        <id>Q6PEX3</id>
    </interactant>
    <interactant intactId="EBI-740343">
        <id>Q93062-3</id>
        <label>RBPMS</label>
    </interactant>
    <organismsDiffer>false</organismsDiffer>
    <experiments>3</experiments>
</comment>
<comment type="interaction">
    <interactant intactId="EBI-3957672">
        <id>Q6PEX3</id>
    </interactant>
    <interactant intactId="EBI-10253121">
        <id>Q6P9E2</id>
        <label>RECK</label>
    </interactant>
    <organismsDiffer>false</organismsDiffer>
    <experiments>3</experiments>
</comment>
<comment type="interaction">
    <interactant intactId="EBI-3957672">
        <id>Q6PEX3</id>
    </interactant>
    <interactant intactId="EBI-372094">
        <id>Q9BQY4</id>
        <label>RHOXF2</label>
    </interactant>
    <organismsDiffer>false</organismsDiffer>
    <experiments>3</experiments>
</comment>
<comment type="interaction">
    <interactant intactId="EBI-3957672">
        <id>Q6PEX3</id>
    </interactant>
    <interactant intactId="EBI-751555">
        <id>Q9H0X6</id>
        <label>RNF208</label>
    </interactant>
    <organismsDiffer>false</organismsDiffer>
    <experiments>3</experiments>
</comment>
<comment type="interaction">
    <interactant intactId="EBI-3957672">
        <id>Q6PEX3</id>
    </interactant>
    <interactant intactId="EBI-744603">
        <id>Q15637</id>
        <label>SF1</label>
    </interactant>
    <organismsDiffer>false</organismsDiffer>
    <experiments>3</experiments>
</comment>
<comment type="interaction">
    <interactant intactId="EBI-3957672">
        <id>Q6PEX3</id>
    </interactant>
    <interactant intactId="EBI-12372219">
        <id>O15304-2</id>
        <label>SIVA1</label>
    </interactant>
    <organismsDiffer>false</organismsDiffer>
    <experiments>3</experiments>
</comment>
<comment type="interaction">
    <interactant intactId="EBI-3957672">
        <id>Q6PEX3</id>
    </interactant>
    <interactant intactId="EBI-12806032">
        <id>Q16348</id>
        <label>SLC15A2</label>
    </interactant>
    <organismsDiffer>false</organismsDiffer>
    <experiments>3</experiments>
</comment>
<comment type="interaction">
    <interactant intactId="EBI-3957672">
        <id>Q6PEX3</id>
    </interactant>
    <interactant intactId="EBI-355653">
        <id>Q92922</id>
        <label>SMARCC1</label>
    </interactant>
    <organismsDiffer>false</organismsDiffer>
    <experiments>3</experiments>
</comment>
<comment type="interaction">
    <interactant intactId="EBI-3957672">
        <id>Q6PEX3</id>
    </interactant>
    <interactant intactId="EBI-12275818">
        <id>Q53HV7-2</id>
        <label>SMUG1</label>
    </interactant>
    <organismsDiffer>false</organismsDiffer>
    <experiments>3</experiments>
</comment>
<comment type="interaction">
    <interactant intactId="EBI-3957672">
        <id>Q6PEX3</id>
    </interactant>
    <interactant intactId="EBI-11959123">
        <id>Q99932-2</id>
        <label>SPAG8</label>
    </interactant>
    <organismsDiffer>false</organismsDiffer>
    <experiments>3</experiments>
</comment>
<comment type="interaction">
    <interactant intactId="EBI-3957672">
        <id>Q6PEX3</id>
    </interactant>
    <interactant intactId="EBI-10696971">
        <id>Q7Z6I5</id>
        <label>SPATA12</label>
    </interactant>
    <organismsDiffer>false</organismsDiffer>
    <experiments>3</experiments>
</comment>
<comment type="interaction">
    <interactant intactId="EBI-3957672">
        <id>Q6PEX3</id>
    </interactant>
    <interactant intactId="EBI-743976">
        <id>Q96LM6</id>
        <label>SPMIP9</label>
    </interactant>
    <organismsDiffer>false</organismsDiffer>
    <experiments>3</experiments>
</comment>
<comment type="interaction">
    <interactant intactId="EBI-3957672">
        <id>Q6PEX3</id>
    </interactant>
    <interactant intactId="EBI-749295">
        <id>O75716</id>
        <label>STK16</label>
    </interactant>
    <organismsDiffer>false</organismsDiffer>
    <experiments>3</experiments>
</comment>
<comment type="interaction">
    <interactant intactId="EBI-3957672">
        <id>Q6PEX3</id>
    </interactant>
    <interactant intactId="EBI-8644516">
        <id>Q9BXF9</id>
        <label>TEKT3</label>
    </interactant>
    <organismsDiffer>false</organismsDiffer>
    <experiments>3</experiments>
</comment>
<comment type="interaction">
    <interactant intactId="EBI-3957672">
        <id>Q6PEX3</id>
    </interactant>
    <interactant intactId="EBI-750487">
        <id>Q8WW24</id>
        <label>TEKT4</label>
    </interactant>
    <organismsDiffer>false</organismsDiffer>
    <experiments>3</experiments>
</comment>
<comment type="interaction">
    <interactant intactId="EBI-3957672">
        <id>Q6PEX3</id>
    </interactant>
    <interactant intactId="EBI-11952651">
        <id>Q7Z6R9</id>
        <label>TFAP2D</label>
    </interactant>
    <organismsDiffer>false</organismsDiffer>
    <experiments>3</experiments>
</comment>
<comment type="interaction">
    <interactant intactId="EBI-3957672">
        <id>Q6PEX3</id>
    </interactant>
    <interactant intactId="EBI-357061">
        <id>Q92734</id>
        <label>TFG</label>
    </interactant>
    <organismsDiffer>false</organismsDiffer>
    <experiments>3</experiments>
</comment>
<comment type="interaction">
    <interactant intactId="EBI-3957672">
        <id>Q6PEX3</id>
    </interactant>
    <interactant intactId="EBI-9088321">
        <id>O94900</id>
        <label>TOX</label>
    </interactant>
    <organismsDiffer>false</organismsDiffer>
    <experiments>3</experiments>
</comment>
<comment type="interaction">
    <interactant intactId="EBI-3957672">
        <id>Q6PEX3</id>
    </interactant>
    <interactant intactId="EBI-5235829">
        <id>Q8IWZ5</id>
        <label>TRIM42</label>
    </interactant>
    <organismsDiffer>false</organismsDiffer>
    <experiments>3</experiments>
</comment>
<comment type="interaction">
    <interactant intactId="EBI-3957672">
        <id>Q6PEX3</id>
    </interactant>
    <interactant intactId="EBI-358993">
        <id>Q15645</id>
        <label>TRIP13</label>
    </interactant>
    <organismsDiffer>false</organismsDiffer>
    <experiments>3</experiments>
</comment>
<comment type="interaction">
    <interactant intactId="EBI-3957672">
        <id>Q6PEX3</id>
    </interactant>
    <interactant intactId="EBI-742327">
        <id>Q15654</id>
        <label>TRIP6</label>
    </interactant>
    <organismsDiffer>false</organismsDiffer>
    <experiments>3</experiments>
</comment>
<comment type="interaction">
    <interactant intactId="EBI-3957672">
        <id>Q6PEX3</id>
    </interactant>
    <interactant intactId="EBI-10249550">
        <id>Q6EMK4</id>
        <label>VASN</label>
    </interactant>
    <organismsDiffer>false</organismsDiffer>
    <experiments>3</experiments>
</comment>
<comment type="interaction">
    <interactant intactId="EBI-3957672">
        <id>Q6PEX3</id>
    </interactant>
    <interactant intactId="EBI-10191303">
        <id>O95231</id>
        <label>VENTX</label>
    </interactant>
    <organismsDiffer>false</organismsDiffer>
    <experiments>3</experiments>
</comment>
<comment type="interaction">
    <interactant intactId="EBI-3957672">
        <id>Q6PEX3</id>
    </interactant>
    <interactant intactId="EBI-1051237">
        <id>Q9BYJ9</id>
        <label>YTHDF1</label>
    </interactant>
    <organismsDiffer>false</organismsDiffer>
    <experiments>3</experiments>
</comment>
<comment type="interaction">
    <interactant intactId="EBI-3957672">
        <id>Q6PEX3</id>
    </interactant>
    <interactant intactId="EBI-3957603">
        <id>P09022</id>
        <label>Hoxa1</label>
    </interactant>
    <organismsDiffer>true</organismsDiffer>
    <experiments>4</experiments>
</comment>
<comment type="interaction">
    <interactant intactId="EBI-3957672">
        <id>Q6PEX3</id>
    </interactant>
    <interactant intactId="EBI-9676218">
        <id>P03410</id>
        <label>tax</label>
    </interactant>
    <organismsDiffer>true</organismsDiffer>
    <experiments>3</experiments>
</comment>
<comment type="tissue specificity">
    <text evidence="1">Localized high up in the well differentiated portion of the hair follicle cuticle (about 10-15 cell layers above the apex of the dermal papilla).</text>
</comment>
<comment type="similarity">
    <text evidence="2">Belongs to the PMG family.</text>
</comment>
<dbReference type="EMBL" id="AB096936">
    <property type="protein sequence ID" value="BAE46351.1"/>
    <property type="molecule type" value="mRNA"/>
</dbReference>
<dbReference type="EMBL" id="AM941740">
    <property type="protein sequence ID" value="CAQ03502.1"/>
    <property type="molecule type" value="mRNA"/>
</dbReference>
<dbReference type="EMBL" id="BC057825">
    <property type="protein sequence ID" value="AAH57825.1"/>
    <property type="molecule type" value="mRNA"/>
</dbReference>
<dbReference type="CCDS" id="CCDS13588.1"/>
<dbReference type="RefSeq" id="NP_981950.1">
    <property type="nucleotide sequence ID" value="NM_203405.2"/>
</dbReference>
<dbReference type="BioGRID" id="132867">
    <property type="interactions" value="95"/>
</dbReference>
<dbReference type="FunCoup" id="Q6PEX3">
    <property type="interactions" value="29"/>
</dbReference>
<dbReference type="IntAct" id="Q6PEX3">
    <property type="interactions" value="91"/>
</dbReference>
<dbReference type="MINT" id="Q6PEX3"/>
<dbReference type="STRING" id="9606.ENSP00000353742"/>
<dbReference type="BioMuta" id="KRTAP26-1"/>
<dbReference type="DMDM" id="74737618"/>
<dbReference type="MassIVE" id="Q6PEX3"/>
<dbReference type="PaxDb" id="9606-ENSP00000353742"/>
<dbReference type="PeptideAtlas" id="Q6PEX3"/>
<dbReference type="ProteomicsDB" id="67085"/>
<dbReference type="Antibodypedia" id="76496">
    <property type="antibodies" value="29 antibodies from 9 providers"/>
</dbReference>
<dbReference type="DNASU" id="388818"/>
<dbReference type="Ensembl" id="ENST00000360542.5">
    <property type="protein sequence ID" value="ENSP00000353742.3"/>
    <property type="gene ID" value="ENSG00000197683.5"/>
</dbReference>
<dbReference type="GeneID" id="388818"/>
<dbReference type="KEGG" id="hsa:388818"/>
<dbReference type="MANE-Select" id="ENST00000360542.5">
    <property type="protein sequence ID" value="ENSP00000353742.3"/>
    <property type="RefSeq nucleotide sequence ID" value="NM_203405.2"/>
    <property type="RefSeq protein sequence ID" value="NP_981950.1"/>
</dbReference>
<dbReference type="UCSC" id="uc002ynw.5">
    <property type="organism name" value="human"/>
</dbReference>
<dbReference type="AGR" id="HGNC:33760"/>
<dbReference type="CTD" id="388818"/>
<dbReference type="GeneCards" id="KRTAP26-1"/>
<dbReference type="HGNC" id="HGNC:33760">
    <property type="gene designation" value="KRTAP26-1"/>
</dbReference>
<dbReference type="HPA" id="ENSG00000197683">
    <property type="expression patterns" value="Tissue enriched (skin)"/>
</dbReference>
<dbReference type="neXtProt" id="NX_Q6PEX3"/>
<dbReference type="PharmGKB" id="PA162393763"/>
<dbReference type="VEuPathDB" id="HostDB:ENSG00000197683"/>
<dbReference type="eggNOG" id="ENOG502SVJ1">
    <property type="taxonomic scope" value="Eukaryota"/>
</dbReference>
<dbReference type="GeneTree" id="ENSGT00730000111511"/>
<dbReference type="HOGENOM" id="CLU_1312603_0_0_1"/>
<dbReference type="InParanoid" id="Q6PEX3"/>
<dbReference type="OMA" id="SSQDHTW"/>
<dbReference type="OrthoDB" id="9617029at2759"/>
<dbReference type="PAN-GO" id="Q6PEX3">
    <property type="GO annotations" value="0 GO annotations based on evolutionary models"/>
</dbReference>
<dbReference type="PhylomeDB" id="Q6PEX3"/>
<dbReference type="TreeFam" id="TF337331"/>
<dbReference type="PathwayCommons" id="Q6PEX3"/>
<dbReference type="Reactome" id="R-HSA-6805567">
    <property type="pathway name" value="Keratinization"/>
</dbReference>
<dbReference type="SignaLink" id="Q6PEX3"/>
<dbReference type="BioGRID-ORCS" id="388818">
    <property type="hits" value="10 hits in 1137 CRISPR screens"/>
</dbReference>
<dbReference type="GenomeRNAi" id="388818"/>
<dbReference type="Pharos" id="Q6PEX3">
    <property type="development level" value="Tdark"/>
</dbReference>
<dbReference type="PRO" id="PR:Q6PEX3"/>
<dbReference type="Proteomes" id="UP000005640">
    <property type="component" value="Chromosome 21"/>
</dbReference>
<dbReference type="RNAct" id="Q6PEX3">
    <property type="molecule type" value="protein"/>
</dbReference>
<dbReference type="Bgee" id="ENSG00000197683">
    <property type="expression patterns" value="Expressed in male germ line stem cell (sensu Vertebrata) in testis and 9 other cell types or tissues"/>
</dbReference>
<dbReference type="GO" id="GO:0005829">
    <property type="term" value="C:cytosol"/>
    <property type="evidence" value="ECO:0000304"/>
    <property type="project" value="Reactome"/>
</dbReference>
<dbReference type="GO" id="GO:0045095">
    <property type="term" value="C:keratin filament"/>
    <property type="evidence" value="ECO:0007669"/>
    <property type="project" value="InterPro"/>
</dbReference>
<dbReference type="GO" id="GO:0005198">
    <property type="term" value="F:structural molecule activity"/>
    <property type="evidence" value="ECO:0007669"/>
    <property type="project" value="InterPro"/>
</dbReference>
<dbReference type="InterPro" id="IPR007659">
    <property type="entry name" value="Keratin_matx"/>
</dbReference>
<dbReference type="InterPro" id="IPR007951">
    <property type="entry name" value="KRTAP_PMG"/>
</dbReference>
<dbReference type="PANTHER" id="PTHR23260">
    <property type="entry name" value="KERATIN ASSOCIATED PROTEIN 3-3-RELATED"/>
    <property type="match status" value="1"/>
</dbReference>
<dbReference type="PANTHER" id="PTHR23260:SF7">
    <property type="entry name" value="KERATIN-ASSOCIATED PROTEIN 26-1"/>
    <property type="match status" value="1"/>
</dbReference>
<dbReference type="Pfam" id="PF05287">
    <property type="entry name" value="PMG"/>
    <property type="match status" value="1"/>
</dbReference>
<name>KR261_HUMAN</name>
<protein>
    <recommendedName>
        <fullName>Keratin-associated protein 26-1</fullName>
    </recommendedName>
</protein>
<sequence>MSCPNYCSGNSNSGSLRTSRHIPLTSIDLCPTSVSCGDVLYLPTSSQDHTWVTDNCQETCGEPTSCQPVHCETGNLETSCGSSTAYYVPRPCQGSSFLPASFFSSSCLPVSCRPQRYVSSGCRPLRPLLNSYQPIGDCVPNAYRPQFCLSKSCQPQNLLTSGCQPSSCLAYRPQSLHVVSSSLRPLGPLFSGCQPLTHVFSTCRPSCSGL</sequence>
<evidence type="ECO:0000269" key="1">
    <source>
    </source>
</evidence>
<evidence type="ECO:0000305" key="2"/>
<feature type="chain" id="PRO_0000223916" description="Keratin-associated protein 26-1">
    <location>
        <begin position="1"/>
        <end position="210"/>
    </location>
</feature>
<feature type="sequence variant" id="VAR_053477" description="In dbSNP:rs3804007.">
    <original>S</original>
    <variation>Y</variation>
    <location>
        <position position="26"/>
    </location>
</feature>
<feature type="sequence variant" id="VAR_053478" description="In dbSNP:rs12483584.">
    <original>P</original>
    <variation>T</variation>
    <location>
        <position position="188"/>
    </location>
</feature>
<keyword id="KW-0416">Keratin</keyword>
<keyword id="KW-1267">Proteomics identification</keyword>
<keyword id="KW-1185">Reference proteome</keyword>
<keyword id="KW-0677">Repeat</keyword>
<gene>
    <name type="primary">KRTAP26-1</name>
    <name type="synonym">KAP26.1</name>
</gene>
<proteinExistence type="evidence at protein level"/>
<accession>Q6PEX3</accession>
<accession>B0RZD3</accession>
<organism>
    <name type="scientific">Homo sapiens</name>
    <name type="common">Human</name>
    <dbReference type="NCBI Taxonomy" id="9606"/>
    <lineage>
        <taxon>Eukaryota</taxon>
        <taxon>Metazoa</taxon>
        <taxon>Chordata</taxon>
        <taxon>Craniata</taxon>
        <taxon>Vertebrata</taxon>
        <taxon>Euteleostomi</taxon>
        <taxon>Mammalia</taxon>
        <taxon>Eutheria</taxon>
        <taxon>Euarchontoglires</taxon>
        <taxon>Primates</taxon>
        <taxon>Haplorrhini</taxon>
        <taxon>Catarrhini</taxon>
        <taxon>Hominidae</taxon>
        <taxon>Homo</taxon>
    </lineage>
</organism>